<dbReference type="EMBL" id="BC078546">
    <property type="protein sequence ID" value="AAH78546.1"/>
    <property type="molecule type" value="mRNA"/>
</dbReference>
<dbReference type="RefSeq" id="NP_001087314.1">
    <property type="nucleotide sequence ID" value="NM_001093845.1"/>
</dbReference>
<dbReference type="SMR" id="Q66KV4"/>
<dbReference type="BioGRID" id="103997">
    <property type="interactions" value="1"/>
</dbReference>
<dbReference type="IntAct" id="Q66KV4">
    <property type="interactions" value="2"/>
</dbReference>
<dbReference type="DNASU" id="447137"/>
<dbReference type="GeneID" id="447137"/>
<dbReference type="KEGG" id="xla:447137"/>
<dbReference type="AGR" id="Xenbase:XB-GENE-6254337"/>
<dbReference type="CTD" id="447137"/>
<dbReference type="Xenbase" id="XB-GENE-6254337">
    <property type="gene designation" value="banf1.S"/>
</dbReference>
<dbReference type="OMA" id="SKQQGDC"/>
<dbReference type="OrthoDB" id="9997163at2759"/>
<dbReference type="Proteomes" id="UP000186698">
    <property type="component" value="Chromosome 4S"/>
</dbReference>
<dbReference type="Bgee" id="447137">
    <property type="expression patterns" value="Expressed in oocyte and 19 other cell types or tissues"/>
</dbReference>
<dbReference type="GO" id="GO:0000785">
    <property type="term" value="C:chromatin"/>
    <property type="evidence" value="ECO:0000250"/>
    <property type="project" value="UniProtKB"/>
</dbReference>
<dbReference type="GO" id="GO:0000793">
    <property type="term" value="C:condensed chromosome"/>
    <property type="evidence" value="ECO:0000318"/>
    <property type="project" value="GO_Central"/>
</dbReference>
<dbReference type="GO" id="GO:0005737">
    <property type="term" value="C:cytoplasm"/>
    <property type="evidence" value="ECO:0007669"/>
    <property type="project" value="UniProtKB-SubCell"/>
</dbReference>
<dbReference type="GO" id="GO:0005635">
    <property type="term" value="C:nuclear envelope"/>
    <property type="evidence" value="ECO:0000314"/>
    <property type="project" value="UniProtKB"/>
</dbReference>
<dbReference type="GO" id="GO:0005634">
    <property type="term" value="C:nucleus"/>
    <property type="evidence" value="ECO:0000318"/>
    <property type="project" value="GO_Central"/>
</dbReference>
<dbReference type="GO" id="GO:0003677">
    <property type="term" value="F:DNA binding"/>
    <property type="evidence" value="ECO:0000318"/>
    <property type="project" value="GO_Central"/>
</dbReference>
<dbReference type="GO" id="GO:0051276">
    <property type="term" value="P:chromosome organization"/>
    <property type="evidence" value="ECO:0000318"/>
    <property type="project" value="GO_Central"/>
</dbReference>
<dbReference type="GO" id="GO:0010836">
    <property type="term" value="P:negative regulation of protein ADP-ribosylation"/>
    <property type="evidence" value="ECO:0000250"/>
    <property type="project" value="UniProtKB"/>
</dbReference>
<dbReference type="GO" id="GO:0006979">
    <property type="term" value="P:response to oxidative stress"/>
    <property type="evidence" value="ECO:0000250"/>
    <property type="project" value="UniProtKB"/>
</dbReference>
<dbReference type="FunFam" id="1.10.150.40:FF:000001">
    <property type="entry name" value="Barrier-to-autointegration factor B"/>
    <property type="match status" value="1"/>
</dbReference>
<dbReference type="Gene3D" id="1.10.150.40">
    <property type="entry name" value="Barrier-to-autointegration factor, BAF"/>
    <property type="match status" value="1"/>
</dbReference>
<dbReference type="InterPro" id="IPR051387">
    <property type="entry name" value="BAF"/>
</dbReference>
<dbReference type="InterPro" id="IPR004122">
    <property type="entry name" value="BAF_prot"/>
</dbReference>
<dbReference type="InterPro" id="IPR036617">
    <property type="entry name" value="BAF_sf"/>
</dbReference>
<dbReference type="PANTHER" id="PTHR47507">
    <property type="entry name" value="BARRIER TO AUTOINTEGRATION FACTOR 2"/>
    <property type="match status" value="1"/>
</dbReference>
<dbReference type="PANTHER" id="PTHR47507:SF10">
    <property type="entry name" value="BARRIER-TO-AUTOINTEGRATION FACTOR B"/>
    <property type="match status" value="1"/>
</dbReference>
<dbReference type="Pfam" id="PF02961">
    <property type="entry name" value="SAM_BAF"/>
    <property type="match status" value="1"/>
</dbReference>
<dbReference type="SMART" id="SM01023">
    <property type="entry name" value="BAF"/>
    <property type="match status" value="1"/>
</dbReference>
<dbReference type="SUPFAM" id="SSF47798">
    <property type="entry name" value="Barrier-to-autointegration factor, BAF"/>
    <property type="match status" value="1"/>
</dbReference>
<protein>
    <recommendedName>
        <fullName>Barrier-to-autointegration factor B</fullName>
    </recommendedName>
</protein>
<keyword id="KW-0158">Chromosome</keyword>
<keyword id="KW-0963">Cytoplasm</keyword>
<keyword id="KW-0238">DNA-binding</keyword>
<keyword id="KW-0539">Nucleus</keyword>
<keyword id="KW-1185">Reference proteome</keyword>
<reference key="1">
    <citation type="submission" date="2004-07" db="EMBL/GenBank/DDBJ databases">
        <authorList>
            <consortium name="NIH - Xenopus Gene Collection (XGC) project"/>
        </authorList>
    </citation>
    <scope>NUCLEOTIDE SEQUENCE [LARGE SCALE MRNA]</scope>
</reference>
<reference key="2">
    <citation type="journal article" date="2009" name="Dev. Biol.">
        <title>Involvement of an inner nuclear membrane protein, Nemp1, in Xenopus neural development through an interaction with the chromatin protein BAF.</title>
        <authorList>
            <person name="Mamada H."/>
            <person name="Takahashi N."/>
            <person name="Taira M."/>
        </authorList>
    </citation>
    <scope>SUBCELLULAR LOCATION</scope>
    <scope>INTERACTION WITH NEMP1A AND NEMP1B</scope>
    <scope>DEVELOPMENTAL STAGE</scope>
</reference>
<accession>Q66KV4</accession>
<evidence type="ECO:0000250" key="1">
    <source>
        <dbReference type="UniProtKB" id="O75531"/>
    </source>
</evidence>
<evidence type="ECO:0000269" key="2">
    <source>
    </source>
</evidence>
<evidence type="ECO:0000305" key="3"/>
<feature type="chain" id="PRO_0000223615" description="Barrier-to-autointegration factor B">
    <location>
        <begin position="1"/>
        <end position="90"/>
    </location>
</feature>
<sequence>MSSTSQKHRDFVAEPMGEKSVQCLAGIGDTLGRRLEEKGFDKAYVVLGQFLVLKKDEELFKEWLKDACSANAKQSRDCYGCLKEWCDAFL</sequence>
<proteinExistence type="evidence at protein level"/>
<name>BAFB_XENLA</name>
<comment type="function">
    <text evidence="1">Non-specific DNA-binding protein that plays key roles in mitotic nuclear reassembly, chromatin organization, DNA damage response, gene expression and intrinsic immunity against foreign DNA. Contains two non-specific double-stranded DNA (dsDNA)-binding sites which promote DNA cross-bridging. Plays a key role in nuclear membrane reformation at the end of mitosis by driving formation of a single nucleus in a spindle-independent manner. Transiently cross-bridges anaphase chromosomes via its ability to bridge distant DNA sites, leading to the formation of a dense chromatin network at the chromosome ensemble surface that limits membranes to the surface. Also acts as a negative regulator of innate immune activation by restricting CGAS activity toward self-DNA upon acute loss of nuclear membrane integrity. Outcompetes CGAS for DNA-binding, thereby preventing CGAS activation and subsequent damaging autoinflammatory responses. Also involved in DNA damage response; acts by inhibiting the ADP-ribosyltransferase activity of PARP1. Involved in the recognition of exogenous dsDNA in the cytosol: associates with exogenous dsDNA immediately after its appearance in the cytosol at endosome breakdown and is required to avoid autophagy.</text>
</comment>
<comment type="subunit">
    <text evidence="1 2">Homodimer (By similarity). Interacts with nemp1a and nemp1b (PubMed:19167377).</text>
</comment>
<comment type="subcellular location">
    <subcellularLocation>
        <location evidence="2">Nucleus</location>
    </subcellularLocation>
    <subcellularLocation>
        <location evidence="1">Chromosome</location>
    </subcellularLocation>
    <subcellularLocation>
        <location evidence="2">Nucleus envelope</location>
    </subcellularLocation>
    <subcellularLocation>
        <location evidence="1">Cytoplasm</location>
    </subcellularLocation>
    <text evidence="1">Significantly enriched at the nuclear inner membrane, diffusely throughout the nucleus during interphase and concentrated at the chromosomes during the M-phase.</text>
</comment>
<comment type="developmental stage">
    <text evidence="2">At the early gastrula stage, expressed mainly in the entire animal hemisphere. During neurulation, its expression becomes restricted to the anterior neuroectoderm. At the tailbud stage, expressed in various anterior regions including the anterior central nervous system (CNS), otic vesicles, and branchial arches.</text>
</comment>
<comment type="domain">
    <text evidence="1">Has a helix-hairpin-helix (HhH) structural motif conserved among proteins that bind non-specifically to DNA.</text>
</comment>
<comment type="similarity">
    <text evidence="3">Belongs to the BAF family.</text>
</comment>
<organism>
    <name type="scientific">Xenopus laevis</name>
    <name type="common">African clawed frog</name>
    <dbReference type="NCBI Taxonomy" id="8355"/>
    <lineage>
        <taxon>Eukaryota</taxon>
        <taxon>Metazoa</taxon>
        <taxon>Chordata</taxon>
        <taxon>Craniata</taxon>
        <taxon>Vertebrata</taxon>
        <taxon>Euteleostomi</taxon>
        <taxon>Amphibia</taxon>
        <taxon>Batrachia</taxon>
        <taxon>Anura</taxon>
        <taxon>Pipoidea</taxon>
        <taxon>Pipidae</taxon>
        <taxon>Xenopodinae</taxon>
        <taxon>Xenopus</taxon>
        <taxon>Xenopus</taxon>
    </lineage>
</organism>
<gene>
    <name type="primary">banf1-b</name>
    <name type="synonym">baf-b</name>
</gene>